<evidence type="ECO:0000255" key="1">
    <source>
        <dbReference type="HAMAP-Rule" id="MF_01454"/>
    </source>
</evidence>
<evidence type="ECO:0000255" key="2">
    <source>
        <dbReference type="PROSITE-ProRule" id="PRU01231"/>
    </source>
</evidence>
<evidence type="ECO:0000256" key="3">
    <source>
        <dbReference type="SAM" id="MobiDB-lite"/>
    </source>
</evidence>
<dbReference type="EC" id="3.6.5.-" evidence="1"/>
<dbReference type="EMBL" id="CP000086">
    <property type="protein sequence ID" value="ABC38857.1"/>
    <property type="molecule type" value="Genomic_DNA"/>
</dbReference>
<dbReference type="SMR" id="Q2SZG0"/>
<dbReference type="GeneID" id="45120894"/>
<dbReference type="KEGG" id="bte:BTH_I1142"/>
<dbReference type="HOGENOM" id="CLU_011747_2_0_4"/>
<dbReference type="Proteomes" id="UP000001930">
    <property type="component" value="Chromosome I"/>
</dbReference>
<dbReference type="GO" id="GO:0005737">
    <property type="term" value="C:cytoplasm"/>
    <property type="evidence" value="ECO:0007669"/>
    <property type="project" value="UniProtKB-SubCell"/>
</dbReference>
<dbReference type="GO" id="GO:0005525">
    <property type="term" value="F:GTP binding"/>
    <property type="evidence" value="ECO:0007669"/>
    <property type="project" value="UniProtKB-UniRule"/>
</dbReference>
<dbReference type="GO" id="GO:0003924">
    <property type="term" value="F:GTPase activity"/>
    <property type="evidence" value="ECO:0007669"/>
    <property type="project" value="UniProtKB-UniRule"/>
</dbReference>
<dbReference type="GO" id="GO:0000287">
    <property type="term" value="F:magnesium ion binding"/>
    <property type="evidence" value="ECO:0007669"/>
    <property type="project" value="InterPro"/>
</dbReference>
<dbReference type="GO" id="GO:0042254">
    <property type="term" value="P:ribosome biogenesis"/>
    <property type="evidence" value="ECO:0007669"/>
    <property type="project" value="UniProtKB-UniRule"/>
</dbReference>
<dbReference type="CDD" id="cd01898">
    <property type="entry name" value="Obg"/>
    <property type="match status" value="1"/>
</dbReference>
<dbReference type="FunFam" id="2.70.210.12:FF:000001">
    <property type="entry name" value="GTPase Obg"/>
    <property type="match status" value="1"/>
</dbReference>
<dbReference type="Gene3D" id="2.70.210.12">
    <property type="entry name" value="GTP1/OBG domain"/>
    <property type="match status" value="1"/>
</dbReference>
<dbReference type="Gene3D" id="3.40.50.300">
    <property type="entry name" value="P-loop containing nucleotide triphosphate hydrolases"/>
    <property type="match status" value="1"/>
</dbReference>
<dbReference type="HAMAP" id="MF_01454">
    <property type="entry name" value="GTPase_Obg"/>
    <property type="match status" value="1"/>
</dbReference>
<dbReference type="InterPro" id="IPR031167">
    <property type="entry name" value="G_OBG"/>
</dbReference>
<dbReference type="InterPro" id="IPR006073">
    <property type="entry name" value="GTP-bd"/>
</dbReference>
<dbReference type="InterPro" id="IPR014100">
    <property type="entry name" value="GTP-bd_Obg/CgtA"/>
</dbReference>
<dbReference type="InterPro" id="IPR006074">
    <property type="entry name" value="GTP1-OBG_CS"/>
</dbReference>
<dbReference type="InterPro" id="IPR006169">
    <property type="entry name" value="GTP1_OBG_dom"/>
</dbReference>
<dbReference type="InterPro" id="IPR036726">
    <property type="entry name" value="GTP1_OBG_dom_sf"/>
</dbReference>
<dbReference type="InterPro" id="IPR045086">
    <property type="entry name" value="OBG_GTPase"/>
</dbReference>
<dbReference type="InterPro" id="IPR027417">
    <property type="entry name" value="P-loop_NTPase"/>
</dbReference>
<dbReference type="NCBIfam" id="TIGR02729">
    <property type="entry name" value="Obg_CgtA"/>
    <property type="match status" value="1"/>
</dbReference>
<dbReference type="NCBIfam" id="NF008954">
    <property type="entry name" value="PRK12296.1"/>
    <property type="match status" value="1"/>
</dbReference>
<dbReference type="NCBIfam" id="NF008955">
    <property type="entry name" value="PRK12297.1"/>
    <property type="match status" value="1"/>
</dbReference>
<dbReference type="NCBIfam" id="NF008956">
    <property type="entry name" value="PRK12299.1"/>
    <property type="match status" value="1"/>
</dbReference>
<dbReference type="PANTHER" id="PTHR11702">
    <property type="entry name" value="DEVELOPMENTALLY REGULATED GTP-BINDING PROTEIN-RELATED"/>
    <property type="match status" value="1"/>
</dbReference>
<dbReference type="PANTHER" id="PTHR11702:SF31">
    <property type="entry name" value="MITOCHONDRIAL RIBOSOME-ASSOCIATED GTPASE 2"/>
    <property type="match status" value="1"/>
</dbReference>
<dbReference type="Pfam" id="PF01018">
    <property type="entry name" value="GTP1_OBG"/>
    <property type="match status" value="1"/>
</dbReference>
<dbReference type="Pfam" id="PF01926">
    <property type="entry name" value="MMR_HSR1"/>
    <property type="match status" value="1"/>
</dbReference>
<dbReference type="PIRSF" id="PIRSF002401">
    <property type="entry name" value="GTP_bd_Obg/CgtA"/>
    <property type="match status" value="1"/>
</dbReference>
<dbReference type="PRINTS" id="PR00326">
    <property type="entry name" value="GTP1OBG"/>
</dbReference>
<dbReference type="SUPFAM" id="SSF82051">
    <property type="entry name" value="Obg GTP-binding protein N-terminal domain"/>
    <property type="match status" value="1"/>
</dbReference>
<dbReference type="SUPFAM" id="SSF52540">
    <property type="entry name" value="P-loop containing nucleoside triphosphate hydrolases"/>
    <property type="match status" value="1"/>
</dbReference>
<dbReference type="PROSITE" id="PS51710">
    <property type="entry name" value="G_OBG"/>
    <property type="match status" value="1"/>
</dbReference>
<dbReference type="PROSITE" id="PS00905">
    <property type="entry name" value="GTP1_OBG"/>
    <property type="match status" value="1"/>
</dbReference>
<dbReference type="PROSITE" id="PS51883">
    <property type="entry name" value="OBG"/>
    <property type="match status" value="1"/>
</dbReference>
<proteinExistence type="inferred from homology"/>
<gene>
    <name evidence="1" type="primary">obg</name>
    <name type="ordered locus">BTH_I1142</name>
</gene>
<accession>Q2SZG0</accession>
<keyword id="KW-0963">Cytoplasm</keyword>
<keyword id="KW-0342">GTP-binding</keyword>
<keyword id="KW-0378">Hydrolase</keyword>
<keyword id="KW-0460">Magnesium</keyword>
<keyword id="KW-0479">Metal-binding</keyword>
<keyword id="KW-0547">Nucleotide-binding</keyword>
<sequence length="372" mass="40116">MKFIDEARIEVIAGDGGDGSASMRREKFVPFGGPDGGDGGRGGSVYVIADRNINTLIDYRYAKKHMARNGENGRGSDCYGKGGDDVTLRMPVGTVINDMDTGELIADLTEHDQKVLVAKGGAGGLGNLHFKSSTNRAPRQKTDGKPGERRMLKLELKVLADVGLLGMPNAGKSTFISSVSNAKPKIADYPFTTLAPNLGVVRVGPGKSFVIADIPGLIEGAAEGAGLGHQFLRHLQRTGLLLHLVDLAPFDESVDPVAEAKAIVGELRKYDESLYQKPRWLVLNKLDMVPEDERRTRVVDFIERFGWTGPVFEISALTGQGCEGLVYAIYDYLAEHSDAHRAELAEDLASDVRFRDASGAGGEPHEREADAP</sequence>
<organism>
    <name type="scientific">Burkholderia thailandensis (strain ATCC 700388 / DSM 13276 / CCUG 48851 / CIP 106301 / E264)</name>
    <dbReference type="NCBI Taxonomy" id="271848"/>
    <lineage>
        <taxon>Bacteria</taxon>
        <taxon>Pseudomonadati</taxon>
        <taxon>Pseudomonadota</taxon>
        <taxon>Betaproteobacteria</taxon>
        <taxon>Burkholderiales</taxon>
        <taxon>Burkholderiaceae</taxon>
        <taxon>Burkholderia</taxon>
        <taxon>pseudomallei group</taxon>
    </lineage>
</organism>
<feature type="chain" id="PRO_0000385794" description="GTPase Obg">
    <location>
        <begin position="1"/>
        <end position="372"/>
    </location>
</feature>
<feature type="domain" description="Obg" evidence="2">
    <location>
        <begin position="1"/>
        <end position="159"/>
    </location>
</feature>
<feature type="domain" description="OBG-type G" evidence="1">
    <location>
        <begin position="160"/>
        <end position="334"/>
    </location>
</feature>
<feature type="region of interest" description="Disordered" evidence="3">
    <location>
        <begin position="128"/>
        <end position="147"/>
    </location>
</feature>
<feature type="binding site" evidence="1">
    <location>
        <begin position="166"/>
        <end position="173"/>
    </location>
    <ligand>
        <name>GTP</name>
        <dbReference type="ChEBI" id="CHEBI:37565"/>
    </ligand>
</feature>
<feature type="binding site" evidence="1">
    <location>
        <position position="173"/>
    </location>
    <ligand>
        <name>Mg(2+)</name>
        <dbReference type="ChEBI" id="CHEBI:18420"/>
    </ligand>
</feature>
<feature type="binding site" evidence="1">
    <location>
        <begin position="191"/>
        <end position="195"/>
    </location>
    <ligand>
        <name>GTP</name>
        <dbReference type="ChEBI" id="CHEBI:37565"/>
    </ligand>
</feature>
<feature type="binding site" evidence="1">
    <location>
        <position position="193"/>
    </location>
    <ligand>
        <name>Mg(2+)</name>
        <dbReference type="ChEBI" id="CHEBI:18420"/>
    </ligand>
</feature>
<feature type="binding site" evidence="1">
    <location>
        <begin position="213"/>
        <end position="216"/>
    </location>
    <ligand>
        <name>GTP</name>
        <dbReference type="ChEBI" id="CHEBI:37565"/>
    </ligand>
</feature>
<feature type="binding site" evidence="1">
    <location>
        <begin position="284"/>
        <end position="287"/>
    </location>
    <ligand>
        <name>GTP</name>
        <dbReference type="ChEBI" id="CHEBI:37565"/>
    </ligand>
</feature>
<feature type="binding site" evidence="1">
    <location>
        <begin position="315"/>
        <end position="317"/>
    </location>
    <ligand>
        <name>GTP</name>
        <dbReference type="ChEBI" id="CHEBI:37565"/>
    </ligand>
</feature>
<name>OBG_BURTA</name>
<protein>
    <recommendedName>
        <fullName evidence="1">GTPase Obg</fullName>
        <ecNumber evidence="1">3.6.5.-</ecNumber>
    </recommendedName>
    <alternativeName>
        <fullName evidence="1">GTP-binding protein Obg</fullName>
    </alternativeName>
</protein>
<comment type="function">
    <text evidence="1">An essential GTPase which binds GTP, GDP and possibly (p)ppGpp with moderate affinity, with high nucleotide exchange rates and a fairly low GTP hydrolysis rate. Plays a role in control of the cell cycle, stress response, ribosome biogenesis and in those bacteria that undergo differentiation, in morphogenesis control.</text>
</comment>
<comment type="cofactor">
    <cofactor evidence="1">
        <name>Mg(2+)</name>
        <dbReference type="ChEBI" id="CHEBI:18420"/>
    </cofactor>
</comment>
<comment type="subunit">
    <text evidence="1">Monomer.</text>
</comment>
<comment type="subcellular location">
    <subcellularLocation>
        <location evidence="1">Cytoplasm</location>
    </subcellularLocation>
</comment>
<comment type="similarity">
    <text evidence="1">Belongs to the TRAFAC class OBG-HflX-like GTPase superfamily. OBG GTPase family.</text>
</comment>
<reference key="1">
    <citation type="journal article" date="2005" name="BMC Genomics">
        <title>Bacterial genome adaptation to niches: divergence of the potential virulence genes in three Burkholderia species of different survival strategies.</title>
        <authorList>
            <person name="Kim H.S."/>
            <person name="Schell M.A."/>
            <person name="Yu Y."/>
            <person name="Ulrich R.L."/>
            <person name="Sarria S.H."/>
            <person name="Nierman W.C."/>
            <person name="DeShazer D."/>
        </authorList>
    </citation>
    <scope>NUCLEOTIDE SEQUENCE [LARGE SCALE GENOMIC DNA]</scope>
    <source>
        <strain>ATCC 700388 / DSM 13276 / CCUG 48851 / CIP 106301 / E264</strain>
    </source>
</reference>